<proteinExistence type="predicted"/>
<reference key="1">
    <citation type="journal article" date="2002" name="Nature">
        <title>The genome sequence of Schizosaccharomyces pombe.</title>
        <authorList>
            <person name="Wood V."/>
            <person name="Gwilliam R."/>
            <person name="Rajandream M.A."/>
            <person name="Lyne M.H."/>
            <person name="Lyne R."/>
            <person name="Stewart A."/>
            <person name="Sgouros J.G."/>
            <person name="Peat N."/>
            <person name="Hayles J."/>
            <person name="Baker S.G."/>
            <person name="Basham D."/>
            <person name="Bowman S."/>
            <person name="Brooks K."/>
            <person name="Brown D."/>
            <person name="Brown S."/>
            <person name="Chillingworth T."/>
            <person name="Churcher C.M."/>
            <person name="Collins M."/>
            <person name="Connor R."/>
            <person name="Cronin A."/>
            <person name="Davis P."/>
            <person name="Feltwell T."/>
            <person name="Fraser A."/>
            <person name="Gentles S."/>
            <person name="Goble A."/>
            <person name="Hamlin N."/>
            <person name="Harris D.E."/>
            <person name="Hidalgo J."/>
            <person name="Hodgson G."/>
            <person name="Holroyd S."/>
            <person name="Hornsby T."/>
            <person name="Howarth S."/>
            <person name="Huckle E.J."/>
            <person name="Hunt S."/>
            <person name="Jagels K."/>
            <person name="James K.D."/>
            <person name="Jones L."/>
            <person name="Jones M."/>
            <person name="Leather S."/>
            <person name="McDonald S."/>
            <person name="McLean J."/>
            <person name="Mooney P."/>
            <person name="Moule S."/>
            <person name="Mungall K.L."/>
            <person name="Murphy L.D."/>
            <person name="Niblett D."/>
            <person name="Odell C."/>
            <person name="Oliver K."/>
            <person name="O'Neil S."/>
            <person name="Pearson D."/>
            <person name="Quail M.A."/>
            <person name="Rabbinowitsch E."/>
            <person name="Rutherford K.M."/>
            <person name="Rutter S."/>
            <person name="Saunders D."/>
            <person name="Seeger K."/>
            <person name="Sharp S."/>
            <person name="Skelton J."/>
            <person name="Simmonds M.N."/>
            <person name="Squares R."/>
            <person name="Squares S."/>
            <person name="Stevens K."/>
            <person name="Taylor K."/>
            <person name="Taylor R.G."/>
            <person name="Tivey A."/>
            <person name="Walsh S.V."/>
            <person name="Warren T."/>
            <person name="Whitehead S."/>
            <person name="Woodward J.R."/>
            <person name="Volckaert G."/>
            <person name="Aert R."/>
            <person name="Robben J."/>
            <person name="Grymonprez B."/>
            <person name="Weltjens I."/>
            <person name="Vanstreels E."/>
            <person name="Rieger M."/>
            <person name="Schaefer M."/>
            <person name="Mueller-Auer S."/>
            <person name="Gabel C."/>
            <person name="Fuchs M."/>
            <person name="Duesterhoeft A."/>
            <person name="Fritzc C."/>
            <person name="Holzer E."/>
            <person name="Moestl D."/>
            <person name="Hilbert H."/>
            <person name="Borzym K."/>
            <person name="Langer I."/>
            <person name="Beck A."/>
            <person name="Lehrach H."/>
            <person name="Reinhardt R."/>
            <person name="Pohl T.M."/>
            <person name="Eger P."/>
            <person name="Zimmermann W."/>
            <person name="Wedler H."/>
            <person name="Wambutt R."/>
            <person name="Purnelle B."/>
            <person name="Goffeau A."/>
            <person name="Cadieu E."/>
            <person name="Dreano S."/>
            <person name="Gloux S."/>
            <person name="Lelaure V."/>
            <person name="Mottier S."/>
            <person name="Galibert F."/>
            <person name="Aves S.J."/>
            <person name="Xiang Z."/>
            <person name="Hunt C."/>
            <person name="Moore K."/>
            <person name="Hurst S.M."/>
            <person name="Lucas M."/>
            <person name="Rochet M."/>
            <person name="Gaillardin C."/>
            <person name="Tallada V.A."/>
            <person name="Garzon A."/>
            <person name="Thode G."/>
            <person name="Daga R.R."/>
            <person name="Cruzado L."/>
            <person name="Jimenez J."/>
            <person name="Sanchez M."/>
            <person name="del Rey F."/>
            <person name="Benito J."/>
            <person name="Dominguez A."/>
            <person name="Revuelta J.L."/>
            <person name="Moreno S."/>
            <person name="Armstrong J."/>
            <person name="Forsburg S.L."/>
            <person name="Cerutti L."/>
            <person name="Lowe T."/>
            <person name="McCombie W.R."/>
            <person name="Paulsen I."/>
            <person name="Potashkin J."/>
            <person name="Shpakovski G.V."/>
            <person name="Ussery D."/>
            <person name="Barrell B.G."/>
            <person name="Nurse P."/>
        </authorList>
    </citation>
    <scope>NUCLEOTIDE SEQUENCE [LARGE SCALE GENOMIC DNA]</scope>
    <source>
        <strain>972 / ATCC 24843</strain>
    </source>
</reference>
<accession>Q09678</accession>
<dbReference type="EMBL" id="CU329670">
    <property type="protein sequence ID" value="CAA89957.1"/>
    <property type="molecule type" value="Genomic_DNA"/>
</dbReference>
<dbReference type="PIR" id="T38971">
    <property type="entry name" value="S55485"/>
</dbReference>
<dbReference type="RefSeq" id="NP_592820.1">
    <property type="nucleotide sequence ID" value="NM_001018220.2"/>
</dbReference>
<dbReference type="BioGRID" id="279152">
    <property type="interactions" value="14"/>
</dbReference>
<dbReference type="PaxDb" id="4896-SPAC5H10.07.1"/>
<dbReference type="EnsemblFungi" id="SPAC5H10.07.1">
    <property type="protein sequence ID" value="SPAC5H10.07.1:pep"/>
    <property type="gene ID" value="SPAC5H10.07"/>
</dbReference>
<dbReference type="KEGG" id="spo:2542699"/>
<dbReference type="PomBase" id="SPAC5H10.07"/>
<dbReference type="VEuPathDB" id="FungiDB:SPAC5H10.07"/>
<dbReference type="HOGENOM" id="CLU_2456039_0_0_1"/>
<dbReference type="InParanoid" id="Q09678"/>
<dbReference type="PRO" id="PR:Q09678"/>
<dbReference type="Proteomes" id="UP000002485">
    <property type="component" value="Chromosome I"/>
</dbReference>
<dbReference type="GO" id="GO:0005737">
    <property type="term" value="C:cytoplasm"/>
    <property type="evidence" value="ECO:0007005"/>
    <property type="project" value="PomBase"/>
</dbReference>
<dbReference type="GO" id="GO:0005829">
    <property type="term" value="C:cytosol"/>
    <property type="evidence" value="ECO:0007005"/>
    <property type="project" value="PomBase"/>
</dbReference>
<dbReference type="GO" id="GO:0005634">
    <property type="term" value="C:nucleus"/>
    <property type="evidence" value="ECO:0007005"/>
    <property type="project" value="PomBase"/>
</dbReference>
<organism>
    <name type="scientific">Schizosaccharomyces pombe (strain 972 / ATCC 24843)</name>
    <name type="common">Fission yeast</name>
    <dbReference type="NCBI Taxonomy" id="284812"/>
    <lineage>
        <taxon>Eukaryota</taxon>
        <taxon>Fungi</taxon>
        <taxon>Dikarya</taxon>
        <taxon>Ascomycota</taxon>
        <taxon>Taphrinomycotina</taxon>
        <taxon>Schizosaccharomycetes</taxon>
        <taxon>Schizosaccharomycetales</taxon>
        <taxon>Schizosaccharomycetaceae</taxon>
        <taxon>Schizosaccharomyces</taxon>
    </lineage>
</organism>
<gene>
    <name type="ORF">SPAC5H10.07</name>
</gene>
<feature type="chain" id="PRO_0000116380" description="Uncharacterized protein C5H10.07">
    <location>
        <begin position="1"/>
        <end position="89"/>
    </location>
</feature>
<name>YA07_SCHPO</name>
<protein>
    <recommendedName>
        <fullName>Uncharacterized protein C5H10.07</fullName>
    </recommendedName>
</protein>
<keyword id="KW-1185">Reference proteome</keyword>
<sequence length="89" mass="10296">MTVLTSYKLYCGPDFPAPLEKKEKREKGKIRNISFLIVLTKGPIWKVSSMESTSYNGCIENLDCKFRKSFIEEIIAYEGFGKYIEVINF</sequence>